<name>RS13_NITHX</name>
<evidence type="ECO:0000255" key="1">
    <source>
        <dbReference type="HAMAP-Rule" id="MF_01315"/>
    </source>
</evidence>
<evidence type="ECO:0000256" key="2">
    <source>
        <dbReference type="SAM" id="MobiDB-lite"/>
    </source>
</evidence>
<evidence type="ECO:0000305" key="3"/>
<accession>Q1QN08</accession>
<keyword id="KW-1185">Reference proteome</keyword>
<keyword id="KW-0687">Ribonucleoprotein</keyword>
<keyword id="KW-0689">Ribosomal protein</keyword>
<keyword id="KW-0694">RNA-binding</keyword>
<keyword id="KW-0699">rRNA-binding</keyword>
<keyword id="KW-0820">tRNA-binding</keyword>
<reference key="1">
    <citation type="submission" date="2006-03" db="EMBL/GenBank/DDBJ databases">
        <title>Complete sequence of chromosome of Nitrobacter hamburgensis X14.</title>
        <authorList>
            <consortium name="US DOE Joint Genome Institute"/>
            <person name="Copeland A."/>
            <person name="Lucas S."/>
            <person name="Lapidus A."/>
            <person name="Barry K."/>
            <person name="Detter J.C."/>
            <person name="Glavina del Rio T."/>
            <person name="Hammon N."/>
            <person name="Israni S."/>
            <person name="Dalin E."/>
            <person name="Tice H."/>
            <person name="Pitluck S."/>
            <person name="Chain P."/>
            <person name="Malfatti S."/>
            <person name="Shin M."/>
            <person name="Vergez L."/>
            <person name="Schmutz J."/>
            <person name="Larimer F."/>
            <person name="Land M."/>
            <person name="Hauser L."/>
            <person name="Kyrpides N."/>
            <person name="Ivanova N."/>
            <person name="Ward B."/>
            <person name="Arp D."/>
            <person name="Klotz M."/>
            <person name="Stein L."/>
            <person name="O'Mullan G."/>
            <person name="Starkenburg S."/>
            <person name="Sayavedra L."/>
            <person name="Poret-Peterson A.T."/>
            <person name="Gentry M.E."/>
            <person name="Bruce D."/>
            <person name="Richardson P."/>
        </authorList>
    </citation>
    <scope>NUCLEOTIDE SEQUENCE [LARGE SCALE GENOMIC DNA]</scope>
    <source>
        <strain>DSM 10229 / NCIMB 13809 / X14</strain>
    </source>
</reference>
<proteinExistence type="inferred from homology"/>
<dbReference type="EMBL" id="CP000319">
    <property type="protein sequence ID" value="ABE62389.1"/>
    <property type="molecule type" value="Genomic_DNA"/>
</dbReference>
<dbReference type="RefSeq" id="WP_011510075.1">
    <property type="nucleotide sequence ID" value="NC_007964.1"/>
</dbReference>
<dbReference type="SMR" id="Q1QN08"/>
<dbReference type="STRING" id="323097.Nham_1567"/>
<dbReference type="KEGG" id="nha:Nham_1567"/>
<dbReference type="eggNOG" id="COG0099">
    <property type="taxonomic scope" value="Bacteria"/>
</dbReference>
<dbReference type="HOGENOM" id="CLU_103849_1_2_5"/>
<dbReference type="OrthoDB" id="9803610at2"/>
<dbReference type="Proteomes" id="UP000001953">
    <property type="component" value="Chromosome"/>
</dbReference>
<dbReference type="GO" id="GO:0005829">
    <property type="term" value="C:cytosol"/>
    <property type="evidence" value="ECO:0007669"/>
    <property type="project" value="TreeGrafter"/>
</dbReference>
<dbReference type="GO" id="GO:0015935">
    <property type="term" value="C:small ribosomal subunit"/>
    <property type="evidence" value="ECO:0007669"/>
    <property type="project" value="TreeGrafter"/>
</dbReference>
<dbReference type="GO" id="GO:0019843">
    <property type="term" value="F:rRNA binding"/>
    <property type="evidence" value="ECO:0007669"/>
    <property type="project" value="UniProtKB-UniRule"/>
</dbReference>
<dbReference type="GO" id="GO:0003735">
    <property type="term" value="F:structural constituent of ribosome"/>
    <property type="evidence" value="ECO:0007669"/>
    <property type="project" value="InterPro"/>
</dbReference>
<dbReference type="GO" id="GO:0000049">
    <property type="term" value="F:tRNA binding"/>
    <property type="evidence" value="ECO:0007669"/>
    <property type="project" value="UniProtKB-UniRule"/>
</dbReference>
<dbReference type="GO" id="GO:0006412">
    <property type="term" value="P:translation"/>
    <property type="evidence" value="ECO:0007669"/>
    <property type="project" value="UniProtKB-UniRule"/>
</dbReference>
<dbReference type="FunFam" id="1.10.8.50:FF:000001">
    <property type="entry name" value="30S ribosomal protein S13"/>
    <property type="match status" value="1"/>
</dbReference>
<dbReference type="FunFam" id="4.10.910.10:FF:000001">
    <property type="entry name" value="30S ribosomal protein S13"/>
    <property type="match status" value="1"/>
</dbReference>
<dbReference type="Gene3D" id="1.10.8.50">
    <property type="match status" value="1"/>
</dbReference>
<dbReference type="Gene3D" id="4.10.910.10">
    <property type="entry name" value="30s ribosomal protein s13, domain 2"/>
    <property type="match status" value="1"/>
</dbReference>
<dbReference type="HAMAP" id="MF_01315">
    <property type="entry name" value="Ribosomal_uS13"/>
    <property type="match status" value="1"/>
</dbReference>
<dbReference type="InterPro" id="IPR027437">
    <property type="entry name" value="Rbsml_uS13_C"/>
</dbReference>
<dbReference type="InterPro" id="IPR001892">
    <property type="entry name" value="Ribosomal_uS13"/>
</dbReference>
<dbReference type="InterPro" id="IPR010979">
    <property type="entry name" value="Ribosomal_uS13-like_H2TH"/>
</dbReference>
<dbReference type="InterPro" id="IPR019980">
    <property type="entry name" value="Ribosomal_uS13_bac-type"/>
</dbReference>
<dbReference type="InterPro" id="IPR018269">
    <property type="entry name" value="Ribosomal_uS13_CS"/>
</dbReference>
<dbReference type="NCBIfam" id="TIGR03631">
    <property type="entry name" value="uS13_bact"/>
    <property type="match status" value="1"/>
</dbReference>
<dbReference type="PANTHER" id="PTHR10871">
    <property type="entry name" value="30S RIBOSOMAL PROTEIN S13/40S RIBOSOMAL PROTEIN S18"/>
    <property type="match status" value="1"/>
</dbReference>
<dbReference type="PANTHER" id="PTHR10871:SF1">
    <property type="entry name" value="SMALL RIBOSOMAL SUBUNIT PROTEIN US13M"/>
    <property type="match status" value="1"/>
</dbReference>
<dbReference type="Pfam" id="PF00416">
    <property type="entry name" value="Ribosomal_S13"/>
    <property type="match status" value="1"/>
</dbReference>
<dbReference type="PIRSF" id="PIRSF002134">
    <property type="entry name" value="Ribosomal_S13"/>
    <property type="match status" value="1"/>
</dbReference>
<dbReference type="SUPFAM" id="SSF46946">
    <property type="entry name" value="S13-like H2TH domain"/>
    <property type="match status" value="1"/>
</dbReference>
<dbReference type="PROSITE" id="PS00646">
    <property type="entry name" value="RIBOSOMAL_S13_1"/>
    <property type="match status" value="1"/>
</dbReference>
<dbReference type="PROSITE" id="PS50159">
    <property type="entry name" value="RIBOSOMAL_S13_2"/>
    <property type="match status" value="1"/>
</dbReference>
<organism>
    <name type="scientific">Nitrobacter hamburgensis (strain DSM 10229 / NCIMB 13809 / X14)</name>
    <dbReference type="NCBI Taxonomy" id="323097"/>
    <lineage>
        <taxon>Bacteria</taxon>
        <taxon>Pseudomonadati</taxon>
        <taxon>Pseudomonadota</taxon>
        <taxon>Alphaproteobacteria</taxon>
        <taxon>Hyphomicrobiales</taxon>
        <taxon>Nitrobacteraceae</taxon>
        <taxon>Nitrobacter</taxon>
    </lineage>
</organism>
<sequence length="122" mass="13814">MARIAGVNIPTNKRVVIALQYIHGIGQKNAAEIIDKVKIPADRRVSQLSDQEVLQIREVIDRDYLVEGDLRREVGINIKRLMDLGCYRGLRHRRGLPVRGQRTHTNARTRKGPAKSIAGKKK</sequence>
<protein>
    <recommendedName>
        <fullName evidence="1">Small ribosomal subunit protein uS13</fullName>
    </recommendedName>
    <alternativeName>
        <fullName evidence="3">30S ribosomal protein S13</fullName>
    </alternativeName>
</protein>
<gene>
    <name evidence="1" type="primary">rpsM</name>
    <name type="ordered locus">Nham_1567</name>
</gene>
<feature type="chain" id="PRO_0000306662" description="Small ribosomal subunit protein uS13">
    <location>
        <begin position="1"/>
        <end position="122"/>
    </location>
</feature>
<feature type="region of interest" description="Disordered" evidence="2">
    <location>
        <begin position="95"/>
        <end position="122"/>
    </location>
</feature>
<comment type="function">
    <text evidence="1">Located at the top of the head of the 30S subunit, it contacts several helices of the 16S rRNA. In the 70S ribosome it contacts the 23S rRNA (bridge B1a) and protein L5 of the 50S subunit (bridge B1b), connecting the 2 subunits; these bridges are implicated in subunit movement. Contacts the tRNAs in the A and P-sites.</text>
</comment>
<comment type="subunit">
    <text evidence="1">Part of the 30S ribosomal subunit. Forms a loose heterodimer with protein S19. Forms two bridges to the 50S subunit in the 70S ribosome.</text>
</comment>
<comment type="similarity">
    <text evidence="1">Belongs to the universal ribosomal protein uS13 family.</text>
</comment>